<proteinExistence type="inferred from homology"/>
<accession>Q57A93</accession>
<gene>
    <name evidence="1" type="primary">fabA</name>
    <name type="ordered locus">BruAb1_2146</name>
</gene>
<comment type="function">
    <text evidence="1">Necessary for the introduction of cis unsaturation into fatty acids. Catalyzes the dehydration of (3R)-3-hydroxydecanoyl-ACP to E-(2)-decenoyl-ACP and then its isomerization to Z-(3)-decenoyl-ACP. Can catalyze the dehydratase reaction for beta-hydroxyacyl-ACPs with saturated chain lengths up to 16:0, being most active on intermediate chain length.</text>
</comment>
<comment type="catalytic activity">
    <reaction evidence="1">
        <text>a (3R)-hydroxyacyl-[ACP] = a (2E)-enoyl-[ACP] + H2O</text>
        <dbReference type="Rhea" id="RHEA:13097"/>
        <dbReference type="Rhea" id="RHEA-COMP:9925"/>
        <dbReference type="Rhea" id="RHEA-COMP:9945"/>
        <dbReference type="ChEBI" id="CHEBI:15377"/>
        <dbReference type="ChEBI" id="CHEBI:78784"/>
        <dbReference type="ChEBI" id="CHEBI:78827"/>
        <dbReference type="EC" id="4.2.1.59"/>
    </reaction>
</comment>
<comment type="catalytic activity">
    <reaction evidence="1">
        <text>(3R)-hydroxydecanoyl-[ACP] = (2E)-decenoyl-[ACP] + H2O</text>
        <dbReference type="Rhea" id="RHEA:41860"/>
        <dbReference type="Rhea" id="RHEA-COMP:9638"/>
        <dbReference type="Rhea" id="RHEA-COMP:9639"/>
        <dbReference type="ChEBI" id="CHEBI:15377"/>
        <dbReference type="ChEBI" id="CHEBI:78466"/>
        <dbReference type="ChEBI" id="CHEBI:78467"/>
    </reaction>
</comment>
<comment type="catalytic activity">
    <reaction evidence="1">
        <text>(2E)-decenoyl-[ACP] = (3Z)-decenoyl-[ACP]</text>
        <dbReference type="Rhea" id="RHEA:23568"/>
        <dbReference type="Rhea" id="RHEA-COMP:9639"/>
        <dbReference type="Rhea" id="RHEA-COMP:9927"/>
        <dbReference type="ChEBI" id="CHEBI:78467"/>
        <dbReference type="ChEBI" id="CHEBI:78798"/>
        <dbReference type="EC" id="5.3.3.14"/>
    </reaction>
</comment>
<comment type="pathway">
    <text evidence="1">Lipid metabolism; fatty acid biosynthesis.</text>
</comment>
<comment type="subunit">
    <text evidence="1">Homodimer.</text>
</comment>
<comment type="subcellular location">
    <subcellularLocation>
        <location evidence="1">Cytoplasm</location>
    </subcellularLocation>
</comment>
<comment type="similarity">
    <text evidence="1">Belongs to the thioester dehydratase family. FabA subfamily.</text>
</comment>
<evidence type="ECO:0000255" key="1">
    <source>
        <dbReference type="HAMAP-Rule" id="MF_00405"/>
    </source>
</evidence>
<protein>
    <recommendedName>
        <fullName evidence="1">3-hydroxydecanoyl-[acyl-carrier-protein] dehydratase</fullName>
        <ecNumber evidence="1">4.2.1.59</ecNumber>
    </recommendedName>
    <alternativeName>
        <fullName evidence="1">3-hydroxyacyl-[acyl-carrier-protein] dehydratase FabA</fullName>
    </alternativeName>
    <alternativeName>
        <fullName evidence="1">Beta-hydroxydecanoyl thioester dehydrase</fullName>
    </alternativeName>
    <alternativeName>
        <fullName evidence="1">Trans-2-decenoyl-[acyl-carrier-protein] isomerase</fullName>
        <ecNumber evidence="1">5.3.3.14</ecNumber>
    </alternativeName>
</protein>
<organism>
    <name type="scientific">Brucella abortus biovar 1 (strain 9-941)</name>
    <dbReference type="NCBI Taxonomy" id="262698"/>
    <lineage>
        <taxon>Bacteria</taxon>
        <taxon>Pseudomonadati</taxon>
        <taxon>Pseudomonadota</taxon>
        <taxon>Alphaproteobacteria</taxon>
        <taxon>Hyphomicrobiales</taxon>
        <taxon>Brucellaceae</taxon>
        <taxon>Brucella/Ochrobactrum group</taxon>
        <taxon>Brucella</taxon>
    </lineage>
</organism>
<sequence>MAEQKSSYGYEELLACGRGEMFGPGNAQLPLPPMLMIHRITEISETGGAFDKGYIRAEYDVRPDDWYFPCHFQGNPIMPGCLGLDGMWQLTGFFLGWLGEPGRGMALSTGEVKFKGMVRPHTKLLEYGIDFKRVMRGRLVLGTADGWLKADGELIYQATDLRVGLSKEGSAQ</sequence>
<keyword id="KW-0963">Cytoplasm</keyword>
<keyword id="KW-0275">Fatty acid biosynthesis</keyword>
<keyword id="KW-0276">Fatty acid metabolism</keyword>
<keyword id="KW-0413">Isomerase</keyword>
<keyword id="KW-0444">Lipid biosynthesis</keyword>
<keyword id="KW-0443">Lipid metabolism</keyword>
<keyword id="KW-0456">Lyase</keyword>
<feature type="chain" id="PRO_0000267723" description="3-hydroxydecanoyl-[acyl-carrier-protein] dehydratase">
    <location>
        <begin position="1"/>
        <end position="172"/>
    </location>
</feature>
<feature type="active site" evidence="1">
    <location>
        <position position="71"/>
    </location>
</feature>
<dbReference type="EC" id="4.2.1.59" evidence="1"/>
<dbReference type="EC" id="5.3.3.14" evidence="1"/>
<dbReference type="EMBL" id="AE017223">
    <property type="protein sequence ID" value="AAX75441.1"/>
    <property type="molecule type" value="Genomic_DNA"/>
</dbReference>
<dbReference type="RefSeq" id="WP_002968051.1">
    <property type="nucleotide sequence ID" value="NC_006932.1"/>
</dbReference>
<dbReference type="SMR" id="Q57A93"/>
<dbReference type="EnsemblBacteria" id="AAX75441">
    <property type="protein sequence ID" value="AAX75441"/>
    <property type="gene ID" value="BruAb1_2146"/>
</dbReference>
<dbReference type="GeneID" id="97534574"/>
<dbReference type="KEGG" id="bmb:BruAb1_2146"/>
<dbReference type="HOGENOM" id="CLU_097925_0_0_5"/>
<dbReference type="UniPathway" id="UPA00094"/>
<dbReference type="Proteomes" id="UP000000540">
    <property type="component" value="Chromosome I"/>
</dbReference>
<dbReference type="GO" id="GO:0005737">
    <property type="term" value="C:cytoplasm"/>
    <property type="evidence" value="ECO:0007669"/>
    <property type="project" value="UniProtKB-SubCell"/>
</dbReference>
<dbReference type="GO" id="GO:0019171">
    <property type="term" value="F:(3R)-hydroxyacyl-[acyl-carrier-protein] dehydratase activity"/>
    <property type="evidence" value="ECO:0007669"/>
    <property type="project" value="UniProtKB-UniRule"/>
</dbReference>
<dbReference type="GO" id="GO:0034017">
    <property type="term" value="F:trans-2-decenoyl-acyl-carrier-protein isomerase activity"/>
    <property type="evidence" value="ECO:0007669"/>
    <property type="project" value="UniProtKB-UniRule"/>
</dbReference>
<dbReference type="GO" id="GO:0006636">
    <property type="term" value="P:unsaturated fatty acid biosynthetic process"/>
    <property type="evidence" value="ECO:0007669"/>
    <property type="project" value="UniProtKB-UniRule"/>
</dbReference>
<dbReference type="CDD" id="cd01287">
    <property type="entry name" value="FabA"/>
    <property type="match status" value="1"/>
</dbReference>
<dbReference type="Gene3D" id="3.10.129.10">
    <property type="entry name" value="Hotdog Thioesterase"/>
    <property type="match status" value="1"/>
</dbReference>
<dbReference type="HAMAP" id="MF_00405">
    <property type="entry name" value="FabA"/>
    <property type="match status" value="1"/>
</dbReference>
<dbReference type="InterPro" id="IPR010083">
    <property type="entry name" value="FabA"/>
</dbReference>
<dbReference type="InterPro" id="IPR013114">
    <property type="entry name" value="FabA_FabZ"/>
</dbReference>
<dbReference type="InterPro" id="IPR029069">
    <property type="entry name" value="HotDog_dom_sf"/>
</dbReference>
<dbReference type="NCBIfam" id="TIGR01749">
    <property type="entry name" value="fabA"/>
    <property type="match status" value="1"/>
</dbReference>
<dbReference type="NCBIfam" id="NF003509">
    <property type="entry name" value="PRK05174.1"/>
    <property type="match status" value="1"/>
</dbReference>
<dbReference type="PANTHER" id="PTHR30272">
    <property type="entry name" value="3-HYDROXYACYL-[ACYL-CARRIER-PROTEIN] DEHYDRATASE"/>
    <property type="match status" value="1"/>
</dbReference>
<dbReference type="PANTHER" id="PTHR30272:SF8">
    <property type="entry name" value="3-HYDROXYDECANOYL-[ACYL-CARRIER-PROTEIN] DEHYDRATASE"/>
    <property type="match status" value="1"/>
</dbReference>
<dbReference type="Pfam" id="PF07977">
    <property type="entry name" value="FabA"/>
    <property type="match status" value="1"/>
</dbReference>
<dbReference type="SUPFAM" id="SSF54637">
    <property type="entry name" value="Thioesterase/thiol ester dehydrase-isomerase"/>
    <property type="match status" value="1"/>
</dbReference>
<name>FABA_BRUAB</name>
<reference key="1">
    <citation type="journal article" date="2005" name="J. Bacteriol.">
        <title>Completion of the genome sequence of Brucella abortus and comparison to the highly similar genomes of Brucella melitensis and Brucella suis.</title>
        <authorList>
            <person name="Halling S.M."/>
            <person name="Peterson-Burch B.D."/>
            <person name="Bricker B.J."/>
            <person name="Zuerner R.L."/>
            <person name="Qing Z."/>
            <person name="Li L.-L."/>
            <person name="Kapur V."/>
            <person name="Alt D.P."/>
            <person name="Olsen S.C."/>
        </authorList>
    </citation>
    <scope>NUCLEOTIDE SEQUENCE [LARGE SCALE GENOMIC DNA]</scope>
    <source>
        <strain>9-941</strain>
    </source>
</reference>